<protein>
    <recommendedName>
        <fullName>Uncharacterized protein YptA</fullName>
    </recommendedName>
</protein>
<sequence>MLNSEHFNLIQRALDATANELKELGTDSSPSVISHAQTDLEKAVEHIYSTDHPFLSSHVINRK</sequence>
<name>YPTA_BACSU</name>
<proteinExistence type="inferred from homology"/>
<reference key="1">
    <citation type="journal article" date="1996" name="Microbiology">
        <title>Sequence analysis of the Bacillus subtilis chromosome region between the serA and kdg loci cloned in a yeast artificial chromosome.</title>
        <authorList>
            <person name="Sorokin A.V."/>
            <person name="Azevedo V."/>
            <person name="Zumstein E."/>
            <person name="Galleron N."/>
            <person name="Ehrlich S.D."/>
            <person name="Serror P."/>
        </authorList>
    </citation>
    <scope>NUCLEOTIDE SEQUENCE [GENOMIC DNA]</scope>
    <source>
        <strain>168 / Marburg / ATCC 6051 / DSM 10 / JCM 1465 / NBRC 13719 / NCIMB 3610 / NRRL NRS-744 / VKM B-501</strain>
    </source>
</reference>
<reference key="2">
    <citation type="journal article" date="1997" name="Nature">
        <title>The complete genome sequence of the Gram-positive bacterium Bacillus subtilis.</title>
        <authorList>
            <person name="Kunst F."/>
            <person name="Ogasawara N."/>
            <person name="Moszer I."/>
            <person name="Albertini A.M."/>
            <person name="Alloni G."/>
            <person name="Azevedo V."/>
            <person name="Bertero M.G."/>
            <person name="Bessieres P."/>
            <person name="Bolotin A."/>
            <person name="Borchert S."/>
            <person name="Borriss R."/>
            <person name="Boursier L."/>
            <person name="Brans A."/>
            <person name="Braun M."/>
            <person name="Brignell S.C."/>
            <person name="Bron S."/>
            <person name="Brouillet S."/>
            <person name="Bruschi C.V."/>
            <person name="Caldwell B."/>
            <person name="Capuano V."/>
            <person name="Carter N.M."/>
            <person name="Choi S.-K."/>
            <person name="Codani J.-J."/>
            <person name="Connerton I.F."/>
            <person name="Cummings N.J."/>
            <person name="Daniel R.A."/>
            <person name="Denizot F."/>
            <person name="Devine K.M."/>
            <person name="Duesterhoeft A."/>
            <person name="Ehrlich S.D."/>
            <person name="Emmerson P.T."/>
            <person name="Entian K.-D."/>
            <person name="Errington J."/>
            <person name="Fabret C."/>
            <person name="Ferrari E."/>
            <person name="Foulger D."/>
            <person name="Fritz C."/>
            <person name="Fujita M."/>
            <person name="Fujita Y."/>
            <person name="Fuma S."/>
            <person name="Galizzi A."/>
            <person name="Galleron N."/>
            <person name="Ghim S.-Y."/>
            <person name="Glaser P."/>
            <person name="Goffeau A."/>
            <person name="Golightly E.J."/>
            <person name="Grandi G."/>
            <person name="Guiseppi G."/>
            <person name="Guy B.J."/>
            <person name="Haga K."/>
            <person name="Haiech J."/>
            <person name="Harwood C.R."/>
            <person name="Henaut A."/>
            <person name="Hilbert H."/>
            <person name="Holsappel S."/>
            <person name="Hosono S."/>
            <person name="Hullo M.-F."/>
            <person name="Itaya M."/>
            <person name="Jones L.-M."/>
            <person name="Joris B."/>
            <person name="Karamata D."/>
            <person name="Kasahara Y."/>
            <person name="Klaerr-Blanchard M."/>
            <person name="Klein C."/>
            <person name="Kobayashi Y."/>
            <person name="Koetter P."/>
            <person name="Koningstein G."/>
            <person name="Krogh S."/>
            <person name="Kumano M."/>
            <person name="Kurita K."/>
            <person name="Lapidus A."/>
            <person name="Lardinois S."/>
            <person name="Lauber J."/>
            <person name="Lazarevic V."/>
            <person name="Lee S.-M."/>
            <person name="Levine A."/>
            <person name="Liu H."/>
            <person name="Masuda S."/>
            <person name="Mauel C."/>
            <person name="Medigue C."/>
            <person name="Medina N."/>
            <person name="Mellado R.P."/>
            <person name="Mizuno M."/>
            <person name="Moestl D."/>
            <person name="Nakai S."/>
            <person name="Noback M."/>
            <person name="Noone D."/>
            <person name="O'Reilly M."/>
            <person name="Ogawa K."/>
            <person name="Ogiwara A."/>
            <person name="Oudega B."/>
            <person name="Park S.-H."/>
            <person name="Parro V."/>
            <person name="Pohl T.M."/>
            <person name="Portetelle D."/>
            <person name="Porwollik S."/>
            <person name="Prescott A.M."/>
            <person name="Presecan E."/>
            <person name="Pujic P."/>
            <person name="Purnelle B."/>
            <person name="Rapoport G."/>
            <person name="Rey M."/>
            <person name="Reynolds S."/>
            <person name="Rieger M."/>
            <person name="Rivolta C."/>
            <person name="Rocha E."/>
            <person name="Roche B."/>
            <person name="Rose M."/>
            <person name="Sadaie Y."/>
            <person name="Sato T."/>
            <person name="Scanlan E."/>
            <person name="Schleich S."/>
            <person name="Schroeter R."/>
            <person name="Scoffone F."/>
            <person name="Sekiguchi J."/>
            <person name="Sekowska A."/>
            <person name="Seror S.J."/>
            <person name="Serror P."/>
            <person name="Shin B.-S."/>
            <person name="Soldo B."/>
            <person name="Sorokin A."/>
            <person name="Tacconi E."/>
            <person name="Takagi T."/>
            <person name="Takahashi H."/>
            <person name="Takemaru K."/>
            <person name="Takeuchi M."/>
            <person name="Tamakoshi A."/>
            <person name="Tanaka T."/>
            <person name="Terpstra P."/>
            <person name="Tognoni A."/>
            <person name="Tosato V."/>
            <person name="Uchiyama S."/>
            <person name="Vandenbol M."/>
            <person name="Vannier F."/>
            <person name="Vassarotti A."/>
            <person name="Viari A."/>
            <person name="Wambutt R."/>
            <person name="Wedler E."/>
            <person name="Wedler H."/>
            <person name="Weitzenegger T."/>
            <person name="Winters P."/>
            <person name="Wipat A."/>
            <person name="Yamamoto H."/>
            <person name="Yamane K."/>
            <person name="Yasumoto K."/>
            <person name="Yata K."/>
            <person name="Yoshida K."/>
            <person name="Yoshikawa H.-F."/>
            <person name="Zumstein E."/>
            <person name="Yoshikawa H."/>
            <person name="Danchin A."/>
        </authorList>
    </citation>
    <scope>NUCLEOTIDE SEQUENCE [LARGE SCALE GENOMIC DNA]</scope>
    <source>
        <strain>168</strain>
    </source>
</reference>
<feature type="signal peptide" evidence="1">
    <location>
        <begin position="1"/>
        <end position="18"/>
    </location>
</feature>
<feature type="chain" id="PRO_0000013726" description="Uncharacterized protein YptA">
    <location>
        <begin position="19"/>
        <end position="63"/>
    </location>
</feature>
<accession>P50841</accession>
<gene>
    <name type="primary">yptA</name>
    <name type="ordered locus">BSU22160</name>
</gene>
<organism>
    <name type="scientific">Bacillus subtilis (strain 168)</name>
    <dbReference type="NCBI Taxonomy" id="224308"/>
    <lineage>
        <taxon>Bacteria</taxon>
        <taxon>Bacillati</taxon>
        <taxon>Bacillota</taxon>
        <taxon>Bacilli</taxon>
        <taxon>Bacillales</taxon>
        <taxon>Bacillaceae</taxon>
        <taxon>Bacillus</taxon>
    </lineage>
</organism>
<keyword id="KW-1185">Reference proteome</keyword>
<keyword id="KW-0732">Signal</keyword>
<dbReference type="EMBL" id="L47838">
    <property type="protein sequence ID" value="AAB38474.1"/>
    <property type="molecule type" value="Genomic_DNA"/>
</dbReference>
<dbReference type="EMBL" id="AL009126">
    <property type="protein sequence ID" value="CAB14133.1"/>
    <property type="molecule type" value="Genomic_DNA"/>
</dbReference>
<dbReference type="PIR" id="G69941">
    <property type="entry name" value="G69941"/>
</dbReference>
<dbReference type="RefSeq" id="NP_390098.1">
    <property type="nucleotide sequence ID" value="NC_000964.3"/>
</dbReference>
<dbReference type="RefSeq" id="WP_003246090.1">
    <property type="nucleotide sequence ID" value="NZ_OZ025638.1"/>
</dbReference>
<dbReference type="SMR" id="P50841"/>
<dbReference type="FunCoup" id="P50841">
    <property type="interactions" value="29"/>
</dbReference>
<dbReference type="STRING" id="224308.BSU22160"/>
<dbReference type="PaxDb" id="224308-BSU22160"/>
<dbReference type="EnsemblBacteria" id="CAB14133">
    <property type="protein sequence ID" value="CAB14133"/>
    <property type="gene ID" value="BSU_22160"/>
</dbReference>
<dbReference type="GeneID" id="939055"/>
<dbReference type="KEGG" id="bsu:BSU22160"/>
<dbReference type="PATRIC" id="fig|224308.179.peg.2420"/>
<dbReference type="InParanoid" id="P50841"/>
<dbReference type="OrthoDB" id="2900558at2"/>
<dbReference type="BioCyc" id="BSUB:BSU22160-MONOMER"/>
<dbReference type="Proteomes" id="UP000001570">
    <property type="component" value="Chromosome"/>
</dbReference>
<evidence type="ECO:0000255" key="1"/>